<reference key="1">
    <citation type="journal article" date="2006" name="J. Biol. Chem.">
        <title>Identification and characterization of a new class of bilin lyase: the cpcT gene encodes a bilin lyase responsible for attachment of phycocyanobilin to Cys-153 on the beta-subunit of phycocyanin in Synechococcus sp. PCC 7002.</title>
        <authorList>
            <person name="Shen G."/>
            <person name="Saunee N.A."/>
            <person name="Williams S.R."/>
            <person name="Gallo E.F."/>
            <person name="Schluchter W.M."/>
            <person name="Bryant D.A."/>
        </authorList>
    </citation>
    <scope>NUCLEOTIDE SEQUENCE [GENOMIC DNA]</scope>
    <scope>FUNCTION IN CHROMOPHORE ATTACHMENT</scope>
    <scope>DISRUPTION PHENOTYPE</scope>
    <source>
        <strain>ATCC 27264 / PCC 7002 / PR-6</strain>
    </source>
</reference>
<reference key="2">
    <citation type="submission" date="2008-02" db="EMBL/GenBank/DDBJ databases">
        <title>Complete sequence of Synechococcus sp. PCC 7002.</title>
        <authorList>
            <person name="Li T."/>
            <person name="Zhao J."/>
            <person name="Zhao C."/>
            <person name="Liu Z."/>
            <person name="Zhao F."/>
            <person name="Marquardt J."/>
            <person name="Nomura C.T."/>
            <person name="Persson S."/>
            <person name="Detter J.C."/>
            <person name="Richardson P.M."/>
            <person name="Lanz C."/>
            <person name="Schuster S.C."/>
            <person name="Wang J."/>
            <person name="Li S."/>
            <person name="Huang X."/>
            <person name="Cai T."/>
            <person name="Yu Z."/>
            <person name="Luo J."/>
            <person name="Zhao J."/>
            <person name="Bryant D.A."/>
        </authorList>
    </citation>
    <scope>NUCLEOTIDE SEQUENCE [LARGE SCALE GENOMIC DNA]</scope>
    <source>
        <strain>ATCC 27264 / PCC 7002 / PR-6</strain>
    </source>
</reference>
<gene>
    <name type="primary">cpcT</name>
    <name type="ordered locus">SYNPCC7002_A2095</name>
</gene>
<organism>
    <name type="scientific">Picosynechococcus sp. (strain ATCC 27264 / PCC 7002 / PR-6)</name>
    <name type="common">Agmenellum quadruplicatum</name>
    <dbReference type="NCBI Taxonomy" id="32049"/>
    <lineage>
        <taxon>Bacteria</taxon>
        <taxon>Bacillati</taxon>
        <taxon>Cyanobacteriota</taxon>
        <taxon>Cyanophyceae</taxon>
        <taxon>Oscillatoriophycideae</taxon>
        <taxon>Chroococcales</taxon>
        <taxon>Geminocystaceae</taxon>
        <taxon>Picosynechococcus</taxon>
    </lineage>
</organism>
<name>CPCT_PICP2</name>
<dbReference type="EC" id="4.-.-.-"/>
<dbReference type="EMBL" id="EU364770">
    <property type="protein sequence ID" value="ABY63662.1"/>
    <property type="molecule type" value="Genomic_DNA"/>
</dbReference>
<dbReference type="EMBL" id="CP000951">
    <property type="protein sequence ID" value="ACB00079.1"/>
    <property type="molecule type" value="Genomic_DNA"/>
</dbReference>
<dbReference type="RefSeq" id="WP_012307700.1">
    <property type="nucleotide sequence ID" value="NZ_JAHHPU010000002.1"/>
</dbReference>
<dbReference type="SMR" id="B1XI94"/>
<dbReference type="STRING" id="32049.SYNPCC7002_A2095"/>
<dbReference type="KEGG" id="syp:SYNPCC7002_A2095"/>
<dbReference type="eggNOG" id="ENOG502Z877">
    <property type="taxonomic scope" value="Bacteria"/>
</dbReference>
<dbReference type="HOGENOM" id="CLU_092589_0_0_3"/>
<dbReference type="BRENDA" id="4.4.1.30">
    <property type="organism ID" value="6187"/>
</dbReference>
<dbReference type="Proteomes" id="UP000001688">
    <property type="component" value="Chromosome"/>
</dbReference>
<dbReference type="GO" id="GO:0016829">
    <property type="term" value="F:lyase activity"/>
    <property type="evidence" value="ECO:0007669"/>
    <property type="project" value="UniProtKB-KW"/>
</dbReference>
<dbReference type="GO" id="GO:0017009">
    <property type="term" value="P:protein-phycocyanobilin linkage"/>
    <property type="evidence" value="ECO:0000314"/>
    <property type="project" value="UniProtKB"/>
</dbReference>
<dbReference type="CDD" id="cd16338">
    <property type="entry name" value="CpcT"/>
    <property type="match status" value="1"/>
</dbReference>
<dbReference type="Gene3D" id="2.40.128.590">
    <property type="entry name" value="CpcT/CpeT domain"/>
    <property type="match status" value="1"/>
</dbReference>
<dbReference type="HAMAP" id="MF_01460">
    <property type="entry name" value="Chrphore_lyase_CpxT"/>
    <property type="match status" value="1"/>
</dbReference>
<dbReference type="InterPro" id="IPR010404">
    <property type="entry name" value="CpcT/CpeT"/>
</dbReference>
<dbReference type="InterPro" id="IPR038672">
    <property type="entry name" value="CpcT/CpeT_sf"/>
</dbReference>
<dbReference type="PANTHER" id="PTHR35137">
    <property type="entry name" value="CHROMOPHORE LYASE CRL, CHLOROPLASTIC"/>
    <property type="match status" value="1"/>
</dbReference>
<dbReference type="PANTHER" id="PTHR35137:SF1">
    <property type="entry name" value="CHROMOPHORE LYASE CRL, CHLOROPLASTIC"/>
    <property type="match status" value="1"/>
</dbReference>
<dbReference type="Pfam" id="PF06206">
    <property type="entry name" value="CpeT"/>
    <property type="match status" value="1"/>
</dbReference>
<accession>B1XI94</accession>
<accession>B0FYI2</accession>
<sequence length="199" mass="22483">MSHSTDAHTLARWMAGEFSNEAQALANPPLWAHIKVCMRPLPNQFFDGYGLYLEQAYSSDTSAPYRLRLFHIKPVDDHMELVHYKPKDDAKTKYMGAARNPAMMQHFDMADLDPMPGCDMIVTWSGTSFKGTVQAGKGCRVVRYNKESYLDNSFEITDNALISIDRGRDPVTNEILWGSLAGAFEFEKINNFSGEVQPH</sequence>
<comment type="function">
    <text evidence="1">Attaches a phycocyanobilin (PCB) chromophore to 'Cys-153' of the C-phycocyanin beta subunit (PhcB). It does not attach chromophore to CpcA, ApcA or ApcB, the other phycobiliproteins.</text>
</comment>
<comment type="disruption phenotype">
    <text evidence="1">Cells are a yellow color, 40% reduction in phycocyanin and grow slowly. The C-phycocyanin beta subunit (PhcB) in this strain is missing the phycocyanobilin chromophore on position 153.</text>
</comment>
<comment type="similarity">
    <text evidence="2">Belongs to the CpcT/CpeT biliprotein lyase family.</text>
</comment>
<proteinExistence type="evidence at protein level"/>
<keyword id="KW-0456">Lyase</keyword>
<keyword id="KW-1185">Reference proteome</keyword>
<feature type="chain" id="PRO_0000403163" description="Phycocyanobilin lyase CpcT">
    <location>
        <begin position="1"/>
        <end position="199"/>
    </location>
</feature>
<feature type="sequence conflict" description="In Ref. 1; ABY63662." evidence="2" ref="1">
    <original>A</original>
    <variation>P</variation>
    <location>
        <position position="181"/>
    </location>
</feature>
<evidence type="ECO:0000269" key="1">
    <source>
    </source>
</evidence>
<evidence type="ECO:0000305" key="2"/>
<protein>
    <recommendedName>
        <fullName>Phycocyanobilin lyase CpcT</fullName>
        <ecNumber>4.-.-.-</ecNumber>
    </recommendedName>
</protein>